<accession>Q7Z4R8</accession>
<accession>B4DHE9</accession>
<accession>E1P5C9</accession>
<dbReference type="EMBL" id="AF451991">
    <property type="protein sequence ID" value="AAP97690.1"/>
    <property type="molecule type" value="mRNA"/>
</dbReference>
<dbReference type="EMBL" id="AK295061">
    <property type="protein sequence ID" value="BAG58110.1"/>
    <property type="molecule type" value="mRNA"/>
</dbReference>
<dbReference type="EMBL" id="AL513547">
    <property type="status" value="NOT_ANNOTATED_CDS"/>
    <property type="molecule type" value="Genomic_DNA"/>
</dbReference>
<dbReference type="EMBL" id="CH471051">
    <property type="protein sequence ID" value="EAW47445.1"/>
    <property type="molecule type" value="Genomic_DNA"/>
</dbReference>
<dbReference type="EMBL" id="CH471051">
    <property type="protein sequence ID" value="EAW47446.1"/>
    <property type="molecule type" value="Genomic_DNA"/>
</dbReference>
<dbReference type="EMBL" id="BC051700">
    <property type="protein sequence ID" value="AAH51700.1"/>
    <property type="molecule type" value="mRNA"/>
</dbReference>
<dbReference type="CCDS" id="CCDS34575.1"/>
<dbReference type="RefSeq" id="NP_001025034.1">
    <property type="nucleotide sequence ID" value="NM_001029863.3"/>
</dbReference>
<dbReference type="RefSeq" id="NP_001304271.1">
    <property type="nucleotide sequence ID" value="NM_001317342.1"/>
</dbReference>
<dbReference type="BioGRID" id="132265">
    <property type="interactions" value="38"/>
</dbReference>
<dbReference type="FunCoup" id="Q7Z4R8">
    <property type="interactions" value="502"/>
</dbReference>
<dbReference type="IntAct" id="Q7Z4R8">
    <property type="interactions" value="22"/>
</dbReference>
<dbReference type="STRING" id="9606.ENSP00000346931"/>
<dbReference type="GlyConnect" id="1885">
    <property type="glycosylation" value="1 N-Linked glycan (1 site)"/>
</dbReference>
<dbReference type="GlyCosmos" id="Q7Z4R8">
    <property type="glycosylation" value="1 site, 1 glycan"/>
</dbReference>
<dbReference type="GlyGen" id="Q7Z4R8">
    <property type="glycosylation" value="1 site, 1 N-linked glycan (1 site)"/>
</dbReference>
<dbReference type="iPTMnet" id="Q7Z4R8"/>
<dbReference type="PhosphoSitePlus" id="Q7Z4R8"/>
<dbReference type="BioMuta" id="C6orf120"/>
<dbReference type="jPOST" id="Q7Z4R8"/>
<dbReference type="MassIVE" id="Q7Z4R8"/>
<dbReference type="PaxDb" id="9606-ENSP00000346931"/>
<dbReference type="PeptideAtlas" id="Q7Z4R8"/>
<dbReference type="ProteomicsDB" id="69225"/>
<dbReference type="Pumba" id="Q7Z4R8"/>
<dbReference type="Antibodypedia" id="49519">
    <property type="antibodies" value="58 antibodies from 10 providers"/>
</dbReference>
<dbReference type="DNASU" id="387263"/>
<dbReference type="Ensembl" id="ENST00000332290.4">
    <property type="protein sequence ID" value="ENSP00000346931.1"/>
    <property type="gene ID" value="ENSG00000185127.7"/>
</dbReference>
<dbReference type="GeneID" id="387263"/>
<dbReference type="KEGG" id="hsa:387263"/>
<dbReference type="MANE-Select" id="ENST00000332290.4">
    <property type="protein sequence ID" value="ENSP00000346931.1"/>
    <property type="RefSeq nucleotide sequence ID" value="NM_001029863.3"/>
    <property type="RefSeq protein sequence ID" value="NP_001025034.1"/>
</dbReference>
<dbReference type="UCSC" id="uc003qxb.4">
    <property type="organism name" value="human"/>
</dbReference>
<dbReference type="AGR" id="HGNC:21247"/>
<dbReference type="CTD" id="387263"/>
<dbReference type="DisGeNET" id="387263"/>
<dbReference type="GeneCards" id="C6orf120"/>
<dbReference type="HGNC" id="HGNC:21247">
    <property type="gene designation" value="C6orf120"/>
</dbReference>
<dbReference type="HPA" id="ENSG00000185127">
    <property type="expression patterns" value="Low tissue specificity"/>
</dbReference>
<dbReference type="MIM" id="616987">
    <property type="type" value="gene"/>
</dbReference>
<dbReference type="neXtProt" id="NX_Q7Z4R8"/>
<dbReference type="OpenTargets" id="ENSG00000185127"/>
<dbReference type="PharmGKB" id="PA134992326"/>
<dbReference type="VEuPathDB" id="HostDB:ENSG00000185127"/>
<dbReference type="eggNOG" id="ENOG502RXJP">
    <property type="taxonomic scope" value="Eukaryota"/>
</dbReference>
<dbReference type="GeneTree" id="ENSGT00390000018879"/>
<dbReference type="HOGENOM" id="CLU_113576_1_0_1"/>
<dbReference type="InParanoid" id="Q7Z4R8"/>
<dbReference type="OMA" id="FGETAYS"/>
<dbReference type="OrthoDB" id="10046613at2759"/>
<dbReference type="PAN-GO" id="Q7Z4R8">
    <property type="GO annotations" value="0 GO annotations based on evolutionary models"/>
</dbReference>
<dbReference type="PhylomeDB" id="Q7Z4R8"/>
<dbReference type="TreeFam" id="TF331743"/>
<dbReference type="PathwayCommons" id="Q7Z4R8"/>
<dbReference type="Reactome" id="R-HSA-6798695">
    <property type="pathway name" value="Neutrophil degranulation"/>
</dbReference>
<dbReference type="SignaLink" id="Q7Z4R8"/>
<dbReference type="BioGRID-ORCS" id="387263">
    <property type="hits" value="9 hits in 1148 CRISPR screens"/>
</dbReference>
<dbReference type="ChiTaRS" id="C6orf120">
    <property type="organism name" value="human"/>
</dbReference>
<dbReference type="GenomeRNAi" id="387263"/>
<dbReference type="Pharos" id="Q7Z4R8">
    <property type="development level" value="Tdark"/>
</dbReference>
<dbReference type="PRO" id="PR:Q7Z4R8"/>
<dbReference type="Proteomes" id="UP000005640">
    <property type="component" value="Chromosome 6"/>
</dbReference>
<dbReference type="RNAct" id="Q7Z4R8">
    <property type="molecule type" value="protein"/>
</dbReference>
<dbReference type="Bgee" id="ENSG00000185127">
    <property type="expression patterns" value="Expressed in decidua and 206 other cell types or tissues"/>
</dbReference>
<dbReference type="GO" id="GO:0035578">
    <property type="term" value="C:azurophil granule lumen"/>
    <property type="evidence" value="ECO:0000304"/>
    <property type="project" value="Reactome"/>
</dbReference>
<dbReference type="GO" id="GO:0005576">
    <property type="term" value="C:extracellular region"/>
    <property type="evidence" value="ECO:0000304"/>
    <property type="project" value="Reactome"/>
</dbReference>
<dbReference type="GO" id="GO:0006915">
    <property type="term" value="P:apoptotic process"/>
    <property type="evidence" value="ECO:0007669"/>
    <property type="project" value="UniProtKB-KW"/>
</dbReference>
<dbReference type="InterPro" id="IPR031420">
    <property type="entry name" value="UPF0669"/>
</dbReference>
<dbReference type="PANTHER" id="PTHR31703">
    <property type="entry name" value="UPF0669 PROTEIN C6ORF120"/>
    <property type="match status" value="1"/>
</dbReference>
<dbReference type="PANTHER" id="PTHR31703:SF2">
    <property type="entry name" value="UPF0669 PROTEIN C6ORF120"/>
    <property type="match status" value="1"/>
</dbReference>
<dbReference type="Pfam" id="PF17065">
    <property type="entry name" value="UPF0669"/>
    <property type="match status" value="1"/>
</dbReference>
<evidence type="ECO:0000255" key="1"/>
<evidence type="ECO:0000269" key="2">
    <source>
    </source>
</evidence>
<evidence type="ECO:0000269" key="3">
    <source>
    </source>
</evidence>
<evidence type="ECO:0000305" key="4"/>
<protein>
    <recommendedName>
        <fullName>UPF0669 protein C6orf120</fullName>
    </recommendedName>
</protein>
<organism>
    <name type="scientific">Homo sapiens</name>
    <name type="common">Human</name>
    <dbReference type="NCBI Taxonomy" id="9606"/>
    <lineage>
        <taxon>Eukaryota</taxon>
        <taxon>Metazoa</taxon>
        <taxon>Chordata</taxon>
        <taxon>Craniata</taxon>
        <taxon>Vertebrata</taxon>
        <taxon>Euteleostomi</taxon>
        <taxon>Mammalia</taxon>
        <taxon>Eutheria</taxon>
        <taxon>Euarchontoglires</taxon>
        <taxon>Primates</taxon>
        <taxon>Haplorrhini</taxon>
        <taxon>Catarrhini</taxon>
        <taxon>Hominidae</taxon>
        <taxon>Homo</taxon>
    </lineage>
</organism>
<keyword id="KW-0053">Apoptosis</keyword>
<keyword id="KW-0325">Glycoprotein</keyword>
<keyword id="KW-1267">Proteomics identification</keyword>
<keyword id="KW-1185">Reference proteome</keyword>
<keyword id="KW-0964">Secreted</keyword>
<keyword id="KW-0732">Signal</keyword>
<gene>
    <name type="primary">C6orf120</name>
</gene>
<proteinExistence type="evidence at protein level"/>
<sequence>MAAPRGRAAPWTTALLLLLASQVLSPGSCADEEEVPEEWVLLHVVQGQIGAGNYSYLRLNHEGKIVLRMRSLKGDADLYVSASSLHPSFDDYELQSATCGPDAVSIPAHFRRPVGIGVYGHPSHLESEFEMKVYYDGTVEQHPFGEAAYPADGADAGQKHAGAPEDASQEEESVLWTILISILKLVLEILF</sequence>
<feature type="signal peptide" evidence="1">
    <location>
        <begin position="1"/>
        <end position="30"/>
    </location>
</feature>
<feature type="chain" id="PRO_0000297662" description="UPF0669 protein C6orf120">
    <location>
        <begin position="31"/>
        <end position="191"/>
    </location>
</feature>
<feature type="glycosylation site" description="N-linked (GlcNAc...) asparagine" evidence="2">
    <location>
        <position position="53"/>
    </location>
</feature>
<reference key="1">
    <citation type="submission" date="2001-11" db="EMBL/GenBank/DDBJ databases">
        <authorList>
            <person name="Zan Q."/>
            <person name="Guo J.H."/>
            <person name="Yu L."/>
        </authorList>
    </citation>
    <scope>NUCLEOTIDE SEQUENCE [LARGE SCALE MRNA]</scope>
    <source>
        <tissue>Placenta</tissue>
    </source>
</reference>
<reference key="2">
    <citation type="journal article" date="2004" name="Nat. Genet.">
        <title>Complete sequencing and characterization of 21,243 full-length human cDNAs.</title>
        <authorList>
            <person name="Ota T."/>
            <person name="Suzuki Y."/>
            <person name="Nishikawa T."/>
            <person name="Otsuki T."/>
            <person name="Sugiyama T."/>
            <person name="Irie R."/>
            <person name="Wakamatsu A."/>
            <person name="Hayashi K."/>
            <person name="Sato H."/>
            <person name="Nagai K."/>
            <person name="Kimura K."/>
            <person name="Makita H."/>
            <person name="Sekine M."/>
            <person name="Obayashi M."/>
            <person name="Nishi T."/>
            <person name="Shibahara T."/>
            <person name="Tanaka T."/>
            <person name="Ishii S."/>
            <person name="Yamamoto J."/>
            <person name="Saito K."/>
            <person name="Kawai Y."/>
            <person name="Isono Y."/>
            <person name="Nakamura Y."/>
            <person name="Nagahari K."/>
            <person name="Murakami K."/>
            <person name="Yasuda T."/>
            <person name="Iwayanagi T."/>
            <person name="Wagatsuma M."/>
            <person name="Shiratori A."/>
            <person name="Sudo H."/>
            <person name="Hosoiri T."/>
            <person name="Kaku Y."/>
            <person name="Kodaira H."/>
            <person name="Kondo H."/>
            <person name="Sugawara M."/>
            <person name="Takahashi M."/>
            <person name="Kanda K."/>
            <person name="Yokoi T."/>
            <person name="Furuya T."/>
            <person name="Kikkawa E."/>
            <person name="Omura Y."/>
            <person name="Abe K."/>
            <person name="Kamihara K."/>
            <person name="Katsuta N."/>
            <person name="Sato K."/>
            <person name="Tanikawa M."/>
            <person name="Yamazaki M."/>
            <person name="Ninomiya K."/>
            <person name="Ishibashi T."/>
            <person name="Yamashita H."/>
            <person name="Murakawa K."/>
            <person name="Fujimori K."/>
            <person name="Tanai H."/>
            <person name="Kimata M."/>
            <person name="Watanabe M."/>
            <person name="Hiraoka S."/>
            <person name="Chiba Y."/>
            <person name="Ishida S."/>
            <person name="Ono Y."/>
            <person name="Takiguchi S."/>
            <person name="Watanabe S."/>
            <person name="Yosida M."/>
            <person name="Hotuta T."/>
            <person name="Kusano J."/>
            <person name="Kanehori K."/>
            <person name="Takahashi-Fujii A."/>
            <person name="Hara H."/>
            <person name="Tanase T.-O."/>
            <person name="Nomura Y."/>
            <person name="Togiya S."/>
            <person name="Komai F."/>
            <person name="Hara R."/>
            <person name="Takeuchi K."/>
            <person name="Arita M."/>
            <person name="Imose N."/>
            <person name="Musashino K."/>
            <person name="Yuuki H."/>
            <person name="Oshima A."/>
            <person name="Sasaki N."/>
            <person name="Aotsuka S."/>
            <person name="Yoshikawa Y."/>
            <person name="Matsunawa H."/>
            <person name="Ichihara T."/>
            <person name="Shiohata N."/>
            <person name="Sano S."/>
            <person name="Moriya S."/>
            <person name="Momiyama H."/>
            <person name="Satoh N."/>
            <person name="Takami S."/>
            <person name="Terashima Y."/>
            <person name="Suzuki O."/>
            <person name="Nakagawa S."/>
            <person name="Senoh A."/>
            <person name="Mizoguchi H."/>
            <person name="Goto Y."/>
            <person name="Shimizu F."/>
            <person name="Wakebe H."/>
            <person name="Hishigaki H."/>
            <person name="Watanabe T."/>
            <person name="Sugiyama A."/>
            <person name="Takemoto M."/>
            <person name="Kawakami B."/>
            <person name="Yamazaki M."/>
            <person name="Watanabe K."/>
            <person name="Kumagai A."/>
            <person name="Itakura S."/>
            <person name="Fukuzumi Y."/>
            <person name="Fujimori Y."/>
            <person name="Komiyama M."/>
            <person name="Tashiro H."/>
            <person name="Tanigami A."/>
            <person name="Fujiwara T."/>
            <person name="Ono T."/>
            <person name="Yamada K."/>
            <person name="Fujii Y."/>
            <person name="Ozaki K."/>
            <person name="Hirao M."/>
            <person name="Ohmori Y."/>
            <person name="Kawabata A."/>
            <person name="Hikiji T."/>
            <person name="Kobatake N."/>
            <person name="Inagaki H."/>
            <person name="Ikema Y."/>
            <person name="Okamoto S."/>
            <person name="Okitani R."/>
            <person name="Kawakami T."/>
            <person name="Noguchi S."/>
            <person name="Itoh T."/>
            <person name="Shigeta K."/>
            <person name="Senba T."/>
            <person name="Matsumura K."/>
            <person name="Nakajima Y."/>
            <person name="Mizuno T."/>
            <person name="Morinaga M."/>
            <person name="Sasaki M."/>
            <person name="Togashi T."/>
            <person name="Oyama M."/>
            <person name="Hata H."/>
            <person name="Watanabe M."/>
            <person name="Komatsu T."/>
            <person name="Mizushima-Sugano J."/>
            <person name="Satoh T."/>
            <person name="Shirai Y."/>
            <person name="Takahashi Y."/>
            <person name="Nakagawa K."/>
            <person name="Okumura K."/>
            <person name="Nagase T."/>
            <person name="Nomura N."/>
            <person name="Kikuchi H."/>
            <person name="Masuho Y."/>
            <person name="Yamashita R."/>
            <person name="Nakai K."/>
            <person name="Yada T."/>
            <person name="Nakamura Y."/>
            <person name="Ohara O."/>
            <person name="Isogai T."/>
            <person name="Sugano S."/>
        </authorList>
    </citation>
    <scope>NUCLEOTIDE SEQUENCE [LARGE SCALE MRNA]</scope>
    <source>
        <tissue>Brain</tissue>
    </source>
</reference>
<reference key="3">
    <citation type="journal article" date="2003" name="Nature">
        <title>The DNA sequence and analysis of human chromosome 6.</title>
        <authorList>
            <person name="Mungall A.J."/>
            <person name="Palmer S.A."/>
            <person name="Sims S.K."/>
            <person name="Edwards C.A."/>
            <person name="Ashurst J.L."/>
            <person name="Wilming L."/>
            <person name="Jones M.C."/>
            <person name="Horton R."/>
            <person name="Hunt S.E."/>
            <person name="Scott C.E."/>
            <person name="Gilbert J.G.R."/>
            <person name="Clamp M.E."/>
            <person name="Bethel G."/>
            <person name="Milne S."/>
            <person name="Ainscough R."/>
            <person name="Almeida J.P."/>
            <person name="Ambrose K.D."/>
            <person name="Andrews T.D."/>
            <person name="Ashwell R.I.S."/>
            <person name="Babbage A.K."/>
            <person name="Bagguley C.L."/>
            <person name="Bailey J."/>
            <person name="Banerjee R."/>
            <person name="Barker D.J."/>
            <person name="Barlow K.F."/>
            <person name="Bates K."/>
            <person name="Beare D.M."/>
            <person name="Beasley H."/>
            <person name="Beasley O."/>
            <person name="Bird C.P."/>
            <person name="Blakey S.E."/>
            <person name="Bray-Allen S."/>
            <person name="Brook J."/>
            <person name="Brown A.J."/>
            <person name="Brown J.Y."/>
            <person name="Burford D.C."/>
            <person name="Burrill W."/>
            <person name="Burton J."/>
            <person name="Carder C."/>
            <person name="Carter N.P."/>
            <person name="Chapman J.C."/>
            <person name="Clark S.Y."/>
            <person name="Clark G."/>
            <person name="Clee C.M."/>
            <person name="Clegg S."/>
            <person name="Cobley V."/>
            <person name="Collier R.E."/>
            <person name="Collins J.E."/>
            <person name="Colman L.K."/>
            <person name="Corby N.R."/>
            <person name="Coville G.J."/>
            <person name="Culley K.M."/>
            <person name="Dhami P."/>
            <person name="Davies J."/>
            <person name="Dunn M."/>
            <person name="Earthrowl M.E."/>
            <person name="Ellington A.E."/>
            <person name="Evans K.A."/>
            <person name="Faulkner L."/>
            <person name="Francis M.D."/>
            <person name="Frankish A."/>
            <person name="Frankland J."/>
            <person name="French L."/>
            <person name="Garner P."/>
            <person name="Garnett J."/>
            <person name="Ghori M.J."/>
            <person name="Gilby L.M."/>
            <person name="Gillson C.J."/>
            <person name="Glithero R.J."/>
            <person name="Grafham D.V."/>
            <person name="Grant M."/>
            <person name="Gribble S."/>
            <person name="Griffiths C."/>
            <person name="Griffiths M.N.D."/>
            <person name="Hall R."/>
            <person name="Halls K.S."/>
            <person name="Hammond S."/>
            <person name="Harley J.L."/>
            <person name="Hart E.A."/>
            <person name="Heath P.D."/>
            <person name="Heathcott R."/>
            <person name="Holmes S.J."/>
            <person name="Howden P.J."/>
            <person name="Howe K.L."/>
            <person name="Howell G.R."/>
            <person name="Huckle E."/>
            <person name="Humphray S.J."/>
            <person name="Humphries M.D."/>
            <person name="Hunt A.R."/>
            <person name="Johnson C.M."/>
            <person name="Joy A.A."/>
            <person name="Kay M."/>
            <person name="Keenan S.J."/>
            <person name="Kimberley A.M."/>
            <person name="King A."/>
            <person name="Laird G.K."/>
            <person name="Langford C."/>
            <person name="Lawlor S."/>
            <person name="Leongamornlert D.A."/>
            <person name="Leversha M."/>
            <person name="Lloyd C.R."/>
            <person name="Lloyd D.M."/>
            <person name="Loveland J.E."/>
            <person name="Lovell J."/>
            <person name="Martin S."/>
            <person name="Mashreghi-Mohammadi M."/>
            <person name="Maslen G.L."/>
            <person name="Matthews L."/>
            <person name="McCann O.T."/>
            <person name="McLaren S.J."/>
            <person name="McLay K."/>
            <person name="McMurray A."/>
            <person name="Moore M.J.F."/>
            <person name="Mullikin J.C."/>
            <person name="Niblett D."/>
            <person name="Nickerson T."/>
            <person name="Novik K.L."/>
            <person name="Oliver K."/>
            <person name="Overton-Larty E.K."/>
            <person name="Parker A."/>
            <person name="Patel R."/>
            <person name="Pearce A.V."/>
            <person name="Peck A.I."/>
            <person name="Phillimore B.J.C.T."/>
            <person name="Phillips S."/>
            <person name="Plumb R.W."/>
            <person name="Porter K.M."/>
            <person name="Ramsey Y."/>
            <person name="Ranby S.A."/>
            <person name="Rice C.M."/>
            <person name="Ross M.T."/>
            <person name="Searle S.M."/>
            <person name="Sehra H.K."/>
            <person name="Sheridan E."/>
            <person name="Skuce C.D."/>
            <person name="Smith S."/>
            <person name="Smith M."/>
            <person name="Spraggon L."/>
            <person name="Squares S.L."/>
            <person name="Steward C.A."/>
            <person name="Sycamore N."/>
            <person name="Tamlyn-Hall G."/>
            <person name="Tester J."/>
            <person name="Theaker A.J."/>
            <person name="Thomas D.W."/>
            <person name="Thorpe A."/>
            <person name="Tracey A."/>
            <person name="Tromans A."/>
            <person name="Tubby B."/>
            <person name="Wall M."/>
            <person name="Wallis J.M."/>
            <person name="West A.P."/>
            <person name="White S.S."/>
            <person name="Whitehead S.L."/>
            <person name="Whittaker H."/>
            <person name="Wild A."/>
            <person name="Willey D.J."/>
            <person name="Wilmer T.E."/>
            <person name="Wood J.M."/>
            <person name="Wray P.W."/>
            <person name="Wyatt J.C."/>
            <person name="Young L."/>
            <person name="Younger R.M."/>
            <person name="Bentley D.R."/>
            <person name="Coulson A."/>
            <person name="Durbin R.M."/>
            <person name="Hubbard T."/>
            <person name="Sulston J.E."/>
            <person name="Dunham I."/>
            <person name="Rogers J."/>
            <person name="Beck S."/>
        </authorList>
    </citation>
    <scope>NUCLEOTIDE SEQUENCE [LARGE SCALE GENOMIC DNA]</scope>
</reference>
<reference key="4">
    <citation type="submission" date="2005-09" db="EMBL/GenBank/DDBJ databases">
        <authorList>
            <person name="Mural R.J."/>
            <person name="Istrail S."/>
            <person name="Sutton G.G."/>
            <person name="Florea L."/>
            <person name="Halpern A.L."/>
            <person name="Mobarry C.M."/>
            <person name="Lippert R."/>
            <person name="Walenz B."/>
            <person name="Shatkay H."/>
            <person name="Dew I."/>
            <person name="Miller J.R."/>
            <person name="Flanigan M.J."/>
            <person name="Edwards N.J."/>
            <person name="Bolanos R."/>
            <person name="Fasulo D."/>
            <person name="Halldorsson B.V."/>
            <person name="Hannenhalli S."/>
            <person name="Turner R."/>
            <person name="Yooseph S."/>
            <person name="Lu F."/>
            <person name="Nusskern D.R."/>
            <person name="Shue B.C."/>
            <person name="Zheng X.H."/>
            <person name="Zhong F."/>
            <person name="Delcher A.L."/>
            <person name="Huson D.H."/>
            <person name="Kravitz S.A."/>
            <person name="Mouchard L."/>
            <person name="Reinert K."/>
            <person name="Remington K.A."/>
            <person name="Clark A.G."/>
            <person name="Waterman M.S."/>
            <person name="Eichler E.E."/>
            <person name="Adams M.D."/>
            <person name="Hunkapiller M.W."/>
            <person name="Myers E.W."/>
            <person name="Venter J.C."/>
        </authorList>
    </citation>
    <scope>NUCLEOTIDE SEQUENCE [LARGE SCALE GENOMIC DNA]</scope>
</reference>
<reference key="5">
    <citation type="journal article" date="2004" name="Genome Res.">
        <title>The status, quality, and expansion of the NIH full-length cDNA project: the Mammalian Gene Collection (MGC).</title>
        <authorList>
            <consortium name="The MGC Project Team"/>
        </authorList>
    </citation>
    <scope>NUCLEOTIDE SEQUENCE [LARGE SCALE MRNA]</scope>
    <source>
        <tissue>Brain</tissue>
    </source>
</reference>
<reference key="6">
    <citation type="journal article" date="2009" name="J. Proteome Res.">
        <title>Glycoproteomics analysis of human liver tissue by combination of multiple enzyme digestion and hydrazide chemistry.</title>
        <authorList>
            <person name="Chen R."/>
            <person name="Jiang X."/>
            <person name="Sun D."/>
            <person name="Han G."/>
            <person name="Wang F."/>
            <person name="Ye M."/>
            <person name="Wang L."/>
            <person name="Zou H."/>
        </authorList>
    </citation>
    <scope>GLYCOSYLATION [LARGE SCALE ANALYSIS] AT ASN-53</scope>
    <source>
        <tissue>Liver</tissue>
    </source>
</reference>
<reference key="7">
    <citation type="journal article" date="2011" name="Chin. Med. J.">
        <title>Role of C6ORF120, an N-glycosylated protein, is implicated in apoptosis of CD4+ T lymphocytes.</title>
        <authorList>
            <person name="Li X."/>
            <person name="Qiao Y."/>
            <person name="Chang L.S."/>
            <person name="Xiao F."/>
            <person name="Lu L.H."/>
            <person name="Hao X.H."/>
            <person name="Zhang R.W."/>
            <person name="Wu H."/>
            <person name="Wei H.S."/>
        </authorList>
    </citation>
    <scope>FUNCTION</scope>
    <scope>SUBCELLULAR LOCATION</scope>
    <scope>TISSUE SPECIFICITY</scope>
</reference>
<reference key="8">
    <citation type="journal article" date="2015" name="Proteomics">
        <title>N-terminome analysis of the human mitochondrial proteome.</title>
        <authorList>
            <person name="Vaca Jacome A.S."/>
            <person name="Rabilloud T."/>
            <person name="Schaeffer-Reiss C."/>
            <person name="Rompais M."/>
            <person name="Ayoub D."/>
            <person name="Lane L."/>
            <person name="Bairoch A."/>
            <person name="Van Dorsselaer A."/>
            <person name="Carapito C."/>
        </authorList>
    </citation>
    <scope>IDENTIFICATION BY MASS SPECTROMETRY [LARGE SCALE ANALYSIS]</scope>
</reference>
<name>CF120_HUMAN</name>
<comment type="function">
    <text evidence="3">May be involved in induction of apoptosis in CD4(+) T-cells, but not CD8(+) T-cells or hepatocytes.</text>
</comment>
<comment type="interaction">
    <interactant intactId="EBI-11050313">
        <id>Q7Z4R8</id>
    </interactant>
    <interactant intactId="EBI-359299">
        <id>O75477</id>
        <label>ERLIN1</label>
    </interactant>
    <organismsDiffer>false</organismsDiffer>
    <experiments>4</experiments>
</comment>
<comment type="subcellular location">
    <subcellularLocation>
        <location evidence="3">Secreted</location>
    </subcellularLocation>
    <text>Secreted by hepatocytes.</text>
</comment>
<comment type="tissue specificity">
    <text evidence="3">Mainly expressed in hepatocytes and some weak expression in germinal center cells of lymph nodes.</text>
</comment>
<comment type="similarity">
    <text evidence="4">Belongs to the UPF0669 family.</text>
</comment>